<reference key="1">
    <citation type="journal article" date="1993" name="Proc. Natl. Acad. Sci. U.S.A.">
        <title>Cloning and characterization of subunit genes of ribonucleotide reductase, a cell-cycle-regulated enzyme, from Plasmodium falciparum.</title>
        <authorList>
            <person name="Chakrabarti D."/>
            <person name="Schuster S.M."/>
            <person name="Chakrabarti R."/>
        </authorList>
    </citation>
    <scope>NUCLEOTIDE SEQUENCE [MRNA]</scope>
</reference>
<evidence type="ECO:0000250" key="1"/>
<evidence type="ECO:0000250" key="2">
    <source>
        <dbReference type="UniProtKB" id="P23921"/>
    </source>
</evidence>
<evidence type="ECO:0000255" key="3">
    <source>
        <dbReference type="PROSITE-ProRule" id="PRU00492"/>
    </source>
</evidence>
<evidence type="ECO:0000305" key="4"/>
<sequence>MYVLNRKGEEEDISFDQILKRIQRLSYGLHELVDPARVTQGVINGMYSGIKTCELDELAAQTCAYMATTHPDFSILAARITTDNLHKNTSDDVAEVAEALYTYKDVRGRPASLISKEVYDFILLHKDRLNKEIDYTRDFNYDYFGFKTLERSYLLRINNKIIERPQHLLMRVSIGIHIDDIDKALETYHLMSQKYFTHATPTLFNSGTPRPQMSSCFLLSMKADSIEGIFETLKQCALISKTAGGIGVAVQDIRGQNSYIRGTNGISNGLVPMLRVFNDTARYVDQGGGKRKGSFAVYIEPWHSDIFEFLDLRKNHGKEELRARDLFYAVWVPDLFMKRVKENKNWTLMCPNECPGLSETWGEEFEKLYTKYEEENMGKKTVLAQDLWFAILQSQIETGVPYMLYKDSCNAKSNQKNLGTIKCSNLCCEIIEYTSPDEVAVCNLASIALCKFVDLEKKEFNFKKLYEITKIITRNLDKIIERNYYPVKEAKTSNTRHRPIGIGVQGLADTFMLLRYPYESDAAKELNKRIFETMYYAALEMSVELASIHGPYESYQGSPASQGILQFDMWNAKVDNKYWDWDELKAKIRKHGLRNSLLLAPMPTASTSQILGNNESFEPYTSNIYYRRVLSGEFFVVNPHLLKDLFDRGLWDEDMKQQLIAHNGSIQYISEIPDDLKELYKTVWEIKQKNIIDMAADRGIFIDQSQSLNIYIQKPTFAKLSSMHFYGWEKGLKTGAYYLRTQAATDAIKFTVDTHVAKNAVKLKNADGVQITREVSRETISTESTVTQNVCPLRRNNDEQCLMCSG</sequence>
<dbReference type="EC" id="1.17.4.1"/>
<dbReference type="EMBL" id="U01323">
    <property type="protein sequence ID" value="AAA50171.1"/>
    <property type="molecule type" value="mRNA"/>
</dbReference>
<dbReference type="SMR" id="P50648"/>
<dbReference type="GO" id="GO:0005971">
    <property type="term" value="C:ribonucleoside-diphosphate reductase complex"/>
    <property type="evidence" value="ECO:0007669"/>
    <property type="project" value="TreeGrafter"/>
</dbReference>
<dbReference type="GO" id="GO:0005524">
    <property type="term" value="F:ATP binding"/>
    <property type="evidence" value="ECO:0007669"/>
    <property type="project" value="UniProtKB-KW"/>
</dbReference>
<dbReference type="GO" id="GO:0004748">
    <property type="term" value="F:ribonucleoside-diphosphate reductase activity, thioredoxin disulfide as acceptor"/>
    <property type="evidence" value="ECO:0000250"/>
    <property type="project" value="UniProtKB"/>
</dbReference>
<dbReference type="GO" id="GO:0009263">
    <property type="term" value="P:deoxyribonucleotide biosynthetic process"/>
    <property type="evidence" value="ECO:0000250"/>
    <property type="project" value="UniProtKB"/>
</dbReference>
<dbReference type="CDD" id="cd01679">
    <property type="entry name" value="RNR_I"/>
    <property type="match status" value="1"/>
</dbReference>
<dbReference type="FunFam" id="3.20.70.20:FF:000010">
    <property type="entry name" value="Ribonucleoside-diphosphate reductase"/>
    <property type="match status" value="1"/>
</dbReference>
<dbReference type="Gene3D" id="3.20.70.20">
    <property type="match status" value="1"/>
</dbReference>
<dbReference type="InterPro" id="IPR005144">
    <property type="entry name" value="ATP-cone_dom"/>
</dbReference>
<dbReference type="InterPro" id="IPR013346">
    <property type="entry name" value="NrdE_NrdA_C"/>
</dbReference>
<dbReference type="InterPro" id="IPR000788">
    <property type="entry name" value="RNR_lg_C"/>
</dbReference>
<dbReference type="InterPro" id="IPR013509">
    <property type="entry name" value="RNR_lsu_N"/>
</dbReference>
<dbReference type="InterPro" id="IPR008926">
    <property type="entry name" value="RNR_R1-su_N"/>
</dbReference>
<dbReference type="InterPro" id="IPR039718">
    <property type="entry name" value="Rrm1"/>
</dbReference>
<dbReference type="NCBIfam" id="TIGR02506">
    <property type="entry name" value="NrdE_NrdA"/>
    <property type="match status" value="1"/>
</dbReference>
<dbReference type="PANTHER" id="PTHR11573">
    <property type="entry name" value="RIBONUCLEOSIDE-DIPHOSPHATE REDUCTASE LARGE CHAIN"/>
    <property type="match status" value="1"/>
</dbReference>
<dbReference type="PANTHER" id="PTHR11573:SF6">
    <property type="entry name" value="RIBONUCLEOSIDE-DIPHOSPHATE REDUCTASE LARGE SUBUNIT"/>
    <property type="match status" value="1"/>
</dbReference>
<dbReference type="Pfam" id="PF03477">
    <property type="entry name" value="ATP-cone"/>
    <property type="match status" value="1"/>
</dbReference>
<dbReference type="Pfam" id="PF02867">
    <property type="entry name" value="Ribonuc_red_lgC"/>
    <property type="match status" value="1"/>
</dbReference>
<dbReference type="Pfam" id="PF00317">
    <property type="entry name" value="Ribonuc_red_lgN"/>
    <property type="match status" value="1"/>
</dbReference>
<dbReference type="PRINTS" id="PR01183">
    <property type="entry name" value="RIBORDTASEM1"/>
</dbReference>
<dbReference type="SUPFAM" id="SSF51998">
    <property type="entry name" value="PFL-like glycyl radical enzymes"/>
    <property type="match status" value="1"/>
</dbReference>
<dbReference type="SUPFAM" id="SSF48168">
    <property type="entry name" value="R1 subunit of ribonucleotide reductase, N-terminal domain"/>
    <property type="match status" value="1"/>
</dbReference>
<dbReference type="PROSITE" id="PS51161">
    <property type="entry name" value="ATP_CONE"/>
    <property type="match status" value="1"/>
</dbReference>
<dbReference type="PROSITE" id="PS00089">
    <property type="entry name" value="RIBORED_LARGE"/>
    <property type="match status" value="1"/>
</dbReference>
<protein>
    <recommendedName>
        <fullName>Ribonucleoside-diphosphate reductase large subunit</fullName>
        <ecNumber>1.17.4.1</ecNumber>
    </recommendedName>
    <alternativeName>
        <fullName>Ribonucleotide reductase R1 subunit</fullName>
    </alternativeName>
</protein>
<organism>
    <name type="scientific">Plasmodium falciparum (isolate Dd2)</name>
    <dbReference type="NCBI Taxonomy" id="57267"/>
    <lineage>
        <taxon>Eukaryota</taxon>
        <taxon>Sar</taxon>
        <taxon>Alveolata</taxon>
        <taxon>Apicomplexa</taxon>
        <taxon>Aconoidasida</taxon>
        <taxon>Haemosporida</taxon>
        <taxon>Plasmodiidae</taxon>
        <taxon>Plasmodium</taxon>
        <taxon>Plasmodium (Laverania)</taxon>
    </lineage>
</organism>
<proteinExistence type="evidence at transcript level"/>
<name>RIR1_PLAF4</name>
<accession>P50648</accession>
<comment type="function">
    <text>Provides the precursors necessary for DNA synthesis. Catalyzes the biosynthesis of deoxyribonucleotides from the corresponding ribonucleotides.</text>
</comment>
<comment type="catalytic activity">
    <reaction>
        <text>a 2'-deoxyribonucleoside 5'-diphosphate + [thioredoxin]-disulfide + H2O = a ribonucleoside 5'-diphosphate + [thioredoxin]-dithiol</text>
        <dbReference type="Rhea" id="RHEA:23252"/>
        <dbReference type="Rhea" id="RHEA-COMP:10698"/>
        <dbReference type="Rhea" id="RHEA-COMP:10700"/>
        <dbReference type="ChEBI" id="CHEBI:15377"/>
        <dbReference type="ChEBI" id="CHEBI:29950"/>
        <dbReference type="ChEBI" id="CHEBI:50058"/>
        <dbReference type="ChEBI" id="CHEBI:57930"/>
        <dbReference type="ChEBI" id="CHEBI:73316"/>
        <dbReference type="EC" id="1.17.4.1"/>
    </reaction>
</comment>
<comment type="activity regulation">
    <text evidence="1">Under complex allosteric control mediated by deoxynucleoside triphosphates and ATP binding to separate specificity and activation sites on the large subunit. The type of nucleotide bound at the specificity site determines substrate preference. It seems probable that ATP makes the enzyme reduce CDP and UDP, dGTP favors ADP reduction and dTTP favors GDP reduction. Stimulated by ATP and inhibited by dATP binding to the activity site (By similarity).</text>
</comment>
<comment type="subunit">
    <text>Heterodimer of a large and a small subunit.</text>
</comment>
<comment type="similarity">
    <text evidence="4">Belongs to the ribonucleoside diphosphate reductase large chain family.</text>
</comment>
<feature type="chain" id="PRO_0000187198" description="Ribonucleoside-diphosphate reductase large subunit">
    <location>
        <begin position="1"/>
        <end position="806"/>
    </location>
</feature>
<feature type="domain" description="ATP-cone" evidence="3">
    <location>
        <begin position="1"/>
        <end position="91"/>
    </location>
</feature>
<feature type="active site" description="Proton acceptor" evidence="1">
    <location>
        <position position="425"/>
    </location>
</feature>
<feature type="active site" description="Cysteine radical intermediate" evidence="1">
    <location>
        <position position="427"/>
    </location>
</feature>
<feature type="active site" description="Proton acceptor" evidence="1">
    <location>
        <position position="429"/>
    </location>
</feature>
<feature type="binding site" evidence="2">
    <location>
        <begin position="5"/>
        <end position="6"/>
    </location>
    <ligand>
        <name>ATP</name>
        <dbReference type="ChEBI" id="CHEBI:30616"/>
        <note>allosteric activator</note>
    </ligand>
</feature>
<feature type="binding site" evidence="2">
    <location>
        <begin position="11"/>
        <end position="17"/>
    </location>
    <ligand>
        <name>ATP</name>
        <dbReference type="ChEBI" id="CHEBI:30616"/>
        <note>allosteric activator</note>
    </ligand>
</feature>
<feature type="binding site" evidence="2">
    <location>
        <position position="52"/>
    </location>
    <ligand>
        <name>ATP</name>
        <dbReference type="ChEBI" id="CHEBI:30616"/>
        <note>allosteric activator</note>
    </ligand>
</feature>
<feature type="binding site" evidence="2">
    <location>
        <position position="56"/>
    </location>
    <ligand>
        <name>ATP</name>
        <dbReference type="ChEBI" id="CHEBI:30616"/>
        <note>allosteric activator</note>
    </ligand>
</feature>
<feature type="binding site" evidence="2">
    <location>
        <position position="215"/>
    </location>
    <ligand>
        <name>GDP</name>
        <dbReference type="ChEBI" id="CHEBI:58189"/>
    </ligand>
</feature>
<feature type="binding site" evidence="2">
    <location>
        <begin position="224"/>
        <end position="226"/>
    </location>
    <ligand>
        <name>dTTP</name>
        <dbReference type="ChEBI" id="CHEBI:37568"/>
        <note>allosteric effector that controls substrate specificity</note>
    </ligand>
</feature>
<feature type="binding site" evidence="2">
    <location>
        <position position="241"/>
    </location>
    <ligand>
        <name>dTTP</name>
        <dbReference type="ChEBI" id="CHEBI:37568"/>
        <note>allosteric effector that controls substrate specificity</note>
    </ligand>
</feature>
<feature type="binding site" evidence="2">
    <location>
        <position position="254"/>
    </location>
    <ligand>
        <name>dTTP</name>
        <dbReference type="ChEBI" id="CHEBI:37568"/>
        <note>allosteric effector that controls substrate specificity</note>
    </ligand>
</feature>
<feature type="binding site" evidence="2">
    <location>
        <begin position="261"/>
        <end position="262"/>
    </location>
    <ligand>
        <name>dTTP</name>
        <dbReference type="ChEBI" id="CHEBI:37568"/>
        <note>allosteric effector that controls substrate specificity</note>
    </ligand>
</feature>
<feature type="binding site" evidence="2">
    <location>
        <position position="425"/>
    </location>
    <ligand>
        <name>GDP</name>
        <dbReference type="ChEBI" id="CHEBI:58189"/>
    </ligand>
</feature>
<feature type="binding site" evidence="2">
    <location>
        <position position="429"/>
    </location>
    <ligand>
        <name>GDP</name>
        <dbReference type="ChEBI" id="CHEBI:58189"/>
    </ligand>
</feature>
<feature type="binding site" evidence="2">
    <location>
        <begin position="604"/>
        <end position="607"/>
    </location>
    <ligand>
        <name>GDP</name>
        <dbReference type="ChEBI" id="CHEBI:58189"/>
    </ligand>
</feature>
<feature type="site" description="Important for hydrogen atom transfer" evidence="1">
    <location>
        <position position="216"/>
    </location>
</feature>
<feature type="site" description="Important for hydrogen atom transfer" evidence="1">
    <location>
        <position position="442"/>
    </location>
</feature>
<feature type="site" description="Important for electron transfer" evidence="1">
    <location>
        <position position="737"/>
    </location>
</feature>
<feature type="site" description="Important for electron transfer" evidence="1">
    <location>
        <position position="738"/>
    </location>
</feature>
<feature type="site" description="Interacts with thioredoxin/glutaredoxin" evidence="1">
    <location>
        <position position="801"/>
    </location>
</feature>
<feature type="site" description="Interacts with thioredoxin/glutaredoxin" evidence="1">
    <location>
        <position position="804"/>
    </location>
</feature>
<feature type="disulfide bond" description="Redox-active" evidence="1">
    <location>
        <begin position="216"/>
        <end position="442"/>
    </location>
</feature>
<gene>
    <name type="primary">RNR1</name>
</gene>
<keyword id="KW-0021">Allosteric enzyme</keyword>
<keyword id="KW-0067">ATP-binding</keyword>
<keyword id="KW-0215">Deoxyribonucleotide synthesis</keyword>
<keyword id="KW-1015">Disulfide bond</keyword>
<keyword id="KW-0547">Nucleotide-binding</keyword>
<keyword id="KW-0560">Oxidoreductase</keyword>